<comment type="function">
    <text evidence="1">Catalyzes the GTP-dependent ribosomal translocation step during translation elongation. During this step, the ribosome changes from the pre-translocational (PRE) to the post-translocational (POST) state as the newly formed A-site-bound peptidyl-tRNA and P-site-bound deacylated tRNA move to the P and E sites, respectively. Catalyzes the coordinated movement of the two tRNA molecules, the mRNA and conformational changes in the ribosome.</text>
</comment>
<comment type="subcellular location">
    <subcellularLocation>
        <location evidence="1">Cytoplasm</location>
    </subcellularLocation>
</comment>
<comment type="similarity">
    <text evidence="1">Belongs to the TRAFAC class translation factor GTPase superfamily. Classic translation factor GTPase family. EF-G/EF-2 subfamily.</text>
</comment>
<reference key="1">
    <citation type="journal article" date="2004" name="Proc. Natl. Acad. Sci. U.S.A.">
        <title>Genomic plasticity of the causative agent of melioidosis, Burkholderia pseudomallei.</title>
        <authorList>
            <person name="Holden M.T.G."/>
            <person name="Titball R.W."/>
            <person name="Peacock S.J."/>
            <person name="Cerdeno-Tarraga A.-M."/>
            <person name="Atkins T."/>
            <person name="Crossman L.C."/>
            <person name="Pitt T."/>
            <person name="Churcher C."/>
            <person name="Mungall K.L."/>
            <person name="Bentley S.D."/>
            <person name="Sebaihia M."/>
            <person name="Thomson N.R."/>
            <person name="Bason N."/>
            <person name="Beacham I.R."/>
            <person name="Brooks K."/>
            <person name="Brown K.A."/>
            <person name="Brown N.F."/>
            <person name="Challis G.L."/>
            <person name="Cherevach I."/>
            <person name="Chillingworth T."/>
            <person name="Cronin A."/>
            <person name="Crossett B."/>
            <person name="Davis P."/>
            <person name="DeShazer D."/>
            <person name="Feltwell T."/>
            <person name="Fraser A."/>
            <person name="Hance Z."/>
            <person name="Hauser H."/>
            <person name="Holroyd S."/>
            <person name="Jagels K."/>
            <person name="Keith K.E."/>
            <person name="Maddison M."/>
            <person name="Moule S."/>
            <person name="Price C."/>
            <person name="Quail M.A."/>
            <person name="Rabbinowitsch E."/>
            <person name="Rutherford K."/>
            <person name="Sanders M."/>
            <person name="Simmonds M."/>
            <person name="Songsivilai S."/>
            <person name="Stevens K."/>
            <person name="Tumapa S."/>
            <person name="Vesaratchavest M."/>
            <person name="Whitehead S."/>
            <person name="Yeats C."/>
            <person name="Barrell B.G."/>
            <person name="Oyston P.C.F."/>
            <person name="Parkhill J."/>
        </authorList>
    </citation>
    <scope>NUCLEOTIDE SEQUENCE [LARGE SCALE GENOMIC DNA]</scope>
    <source>
        <strain>K96243</strain>
    </source>
</reference>
<feature type="chain" id="PRO_0000091095" description="Elongation factor G 1">
    <location>
        <begin position="1"/>
        <end position="704"/>
    </location>
</feature>
<feature type="domain" description="tr-type G">
    <location>
        <begin position="8"/>
        <end position="291"/>
    </location>
</feature>
<feature type="binding site" evidence="1">
    <location>
        <begin position="17"/>
        <end position="24"/>
    </location>
    <ligand>
        <name>GTP</name>
        <dbReference type="ChEBI" id="CHEBI:37565"/>
    </ligand>
</feature>
<feature type="binding site" evidence="1">
    <location>
        <begin position="88"/>
        <end position="92"/>
    </location>
    <ligand>
        <name>GTP</name>
        <dbReference type="ChEBI" id="CHEBI:37565"/>
    </ligand>
</feature>
<feature type="binding site" evidence="1">
    <location>
        <begin position="142"/>
        <end position="145"/>
    </location>
    <ligand>
        <name>GTP</name>
        <dbReference type="ChEBI" id="CHEBI:37565"/>
    </ligand>
</feature>
<protein>
    <recommendedName>
        <fullName evidence="1">Elongation factor G 1</fullName>
        <shortName evidence="1">EF-G 1</shortName>
    </recommendedName>
</protein>
<sequence>MPRKTPIERYRNIGISAHIDAGKTTTTERILFYTGVSHKIGEVHDGAATMDWMEQEQERGITITSAATTAFWKGMAGNYPEHRINIIDTPGHVDFTIEVERSMRVLDGACMVYDSVGGVQPQSETVWRQANKYKVPRIAFVNKMDRVGADFFRVQRQIGERLKGVAVPIQIPVGAEEHFQGVVDLVKMKAIVWDDESQGVKFTYEDIPANLVELAHEWREKMVEAAAEASEELLEKYLTDHNSLTEDEIKAALRKRTIANEIVPMLCGSAFKNKGVQAMLDAVIDYLPSPADVPAILGHDLDDKEAERHPSDDEPFSALAFKIMTDPFVGQLIFFRVYSGVVESGDTLLNATKDKKERLGRILQMHANERKEIKEVRAGDIAAAVGLKEATTGDTLCDPGKPIILEKMEFPEPVISQAVEPKTKADQEKMGLALNRLAQEDPSFRVQTDEESGQTIISGMGELHLEIIVDRMKREFGVEATVGKPQVAYRETVRTVAEDVEGKFVKQSGGRGQYGHAVIKLEPNPGKGYEFLDEIKGGVIPREFIPAVNKGIEETLKSGVLAGYPVVDVKVHLTFGSYHDVDSNENAFRMAGSMAFKEAMRRAKPVLLEPMMAVEVETPEDFMGNVMGDLSSRRGIVQGMEDIAGGGGKLVRAEVPLAEMFGYSTSLRSATQGRATYTMEFKHYAETPSNVSEAVINAKQVGRG</sequence>
<organism>
    <name type="scientific">Burkholderia pseudomallei (strain K96243)</name>
    <dbReference type="NCBI Taxonomy" id="272560"/>
    <lineage>
        <taxon>Bacteria</taxon>
        <taxon>Pseudomonadati</taxon>
        <taxon>Pseudomonadota</taxon>
        <taxon>Betaproteobacteria</taxon>
        <taxon>Burkholderiales</taxon>
        <taxon>Burkholderiaceae</taxon>
        <taxon>Burkholderia</taxon>
        <taxon>pseudomallei group</taxon>
    </lineage>
</organism>
<evidence type="ECO:0000255" key="1">
    <source>
        <dbReference type="HAMAP-Rule" id="MF_00054"/>
    </source>
</evidence>
<accession>Q63WJ7</accession>
<proteinExistence type="inferred from homology"/>
<dbReference type="EMBL" id="BX571965">
    <property type="protein sequence ID" value="CAH34886.1"/>
    <property type="molecule type" value="Genomic_DNA"/>
</dbReference>
<dbReference type="RefSeq" id="YP_107519.1">
    <property type="nucleotide sequence ID" value="NC_006350.1"/>
</dbReference>
<dbReference type="SMR" id="Q63WJ7"/>
<dbReference type="STRING" id="272560.BPSL0893"/>
<dbReference type="KEGG" id="bps:BPSL0893"/>
<dbReference type="PATRIC" id="fig|272560.51.peg.691"/>
<dbReference type="eggNOG" id="COG0480">
    <property type="taxonomic scope" value="Bacteria"/>
</dbReference>
<dbReference type="Proteomes" id="UP000000605">
    <property type="component" value="Chromosome 1"/>
</dbReference>
<dbReference type="GO" id="GO:0005737">
    <property type="term" value="C:cytoplasm"/>
    <property type="evidence" value="ECO:0007669"/>
    <property type="project" value="UniProtKB-SubCell"/>
</dbReference>
<dbReference type="GO" id="GO:0005525">
    <property type="term" value="F:GTP binding"/>
    <property type="evidence" value="ECO:0007669"/>
    <property type="project" value="UniProtKB-UniRule"/>
</dbReference>
<dbReference type="GO" id="GO:0003924">
    <property type="term" value="F:GTPase activity"/>
    <property type="evidence" value="ECO:0007669"/>
    <property type="project" value="InterPro"/>
</dbReference>
<dbReference type="GO" id="GO:0097216">
    <property type="term" value="F:guanosine tetraphosphate binding"/>
    <property type="evidence" value="ECO:0007669"/>
    <property type="project" value="UniProtKB-ARBA"/>
</dbReference>
<dbReference type="GO" id="GO:0003746">
    <property type="term" value="F:translation elongation factor activity"/>
    <property type="evidence" value="ECO:0007669"/>
    <property type="project" value="UniProtKB-UniRule"/>
</dbReference>
<dbReference type="GO" id="GO:0032790">
    <property type="term" value="P:ribosome disassembly"/>
    <property type="evidence" value="ECO:0007669"/>
    <property type="project" value="TreeGrafter"/>
</dbReference>
<dbReference type="CDD" id="cd01886">
    <property type="entry name" value="EF-G"/>
    <property type="match status" value="1"/>
</dbReference>
<dbReference type="CDD" id="cd16262">
    <property type="entry name" value="EFG_III"/>
    <property type="match status" value="1"/>
</dbReference>
<dbReference type="CDD" id="cd01434">
    <property type="entry name" value="EFG_mtEFG1_IV"/>
    <property type="match status" value="1"/>
</dbReference>
<dbReference type="CDD" id="cd03713">
    <property type="entry name" value="EFG_mtEFG_C"/>
    <property type="match status" value="1"/>
</dbReference>
<dbReference type="CDD" id="cd04088">
    <property type="entry name" value="EFG_mtEFG_II"/>
    <property type="match status" value="1"/>
</dbReference>
<dbReference type="FunFam" id="2.40.30.10:FF:000006">
    <property type="entry name" value="Elongation factor G"/>
    <property type="match status" value="1"/>
</dbReference>
<dbReference type="FunFam" id="3.30.230.10:FF:000003">
    <property type="entry name" value="Elongation factor G"/>
    <property type="match status" value="1"/>
</dbReference>
<dbReference type="FunFam" id="3.30.70.240:FF:000001">
    <property type="entry name" value="Elongation factor G"/>
    <property type="match status" value="1"/>
</dbReference>
<dbReference type="FunFam" id="3.30.70.870:FF:000001">
    <property type="entry name" value="Elongation factor G"/>
    <property type="match status" value="1"/>
</dbReference>
<dbReference type="FunFam" id="3.40.50.300:FF:000029">
    <property type="entry name" value="Elongation factor G"/>
    <property type="match status" value="1"/>
</dbReference>
<dbReference type="Gene3D" id="3.30.230.10">
    <property type="match status" value="1"/>
</dbReference>
<dbReference type="Gene3D" id="3.30.70.240">
    <property type="match status" value="1"/>
</dbReference>
<dbReference type="Gene3D" id="3.30.70.870">
    <property type="entry name" value="Elongation Factor G (Translational Gtpase), domain 3"/>
    <property type="match status" value="1"/>
</dbReference>
<dbReference type="Gene3D" id="3.40.50.300">
    <property type="entry name" value="P-loop containing nucleotide triphosphate hydrolases"/>
    <property type="match status" value="1"/>
</dbReference>
<dbReference type="Gene3D" id="2.40.30.10">
    <property type="entry name" value="Translation factors"/>
    <property type="match status" value="1"/>
</dbReference>
<dbReference type="HAMAP" id="MF_00054_B">
    <property type="entry name" value="EF_G_EF_2_B"/>
    <property type="match status" value="1"/>
</dbReference>
<dbReference type="InterPro" id="IPR041095">
    <property type="entry name" value="EFG_II"/>
</dbReference>
<dbReference type="InterPro" id="IPR009022">
    <property type="entry name" value="EFG_III"/>
</dbReference>
<dbReference type="InterPro" id="IPR035647">
    <property type="entry name" value="EFG_III/V"/>
</dbReference>
<dbReference type="InterPro" id="IPR047872">
    <property type="entry name" value="EFG_IV"/>
</dbReference>
<dbReference type="InterPro" id="IPR035649">
    <property type="entry name" value="EFG_V"/>
</dbReference>
<dbReference type="InterPro" id="IPR000640">
    <property type="entry name" value="EFG_V-like"/>
</dbReference>
<dbReference type="InterPro" id="IPR004161">
    <property type="entry name" value="EFTu-like_2"/>
</dbReference>
<dbReference type="InterPro" id="IPR031157">
    <property type="entry name" value="G_TR_CS"/>
</dbReference>
<dbReference type="InterPro" id="IPR027417">
    <property type="entry name" value="P-loop_NTPase"/>
</dbReference>
<dbReference type="InterPro" id="IPR020568">
    <property type="entry name" value="Ribosomal_Su5_D2-typ_SF"/>
</dbReference>
<dbReference type="InterPro" id="IPR014721">
    <property type="entry name" value="Ribsml_uS5_D2-typ_fold_subgr"/>
</dbReference>
<dbReference type="InterPro" id="IPR005225">
    <property type="entry name" value="Small_GTP-bd"/>
</dbReference>
<dbReference type="InterPro" id="IPR000795">
    <property type="entry name" value="T_Tr_GTP-bd_dom"/>
</dbReference>
<dbReference type="InterPro" id="IPR009000">
    <property type="entry name" value="Transl_B-barrel_sf"/>
</dbReference>
<dbReference type="InterPro" id="IPR004540">
    <property type="entry name" value="Transl_elong_EFG/EF2"/>
</dbReference>
<dbReference type="InterPro" id="IPR005517">
    <property type="entry name" value="Transl_elong_EFG/EF2_IV"/>
</dbReference>
<dbReference type="NCBIfam" id="TIGR00484">
    <property type="entry name" value="EF-G"/>
    <property type="match status" value="1"/>
</dbReference>
<dbReference type="NCBIfam" id="NF009381">
    <property type="entry name" value="PRK12740.1-5"/>
    <property type="match status" value="1"/>
</dbReference>
<dbReference type="NCBIfam" id="TIGR00231">
    <property type="entry name" value="small_GTP"/>
    <property type="match status" value="1"/>
</dbReference>
<dbReference type="PANTHER" id="PTHR43261:SF1">
    <property type="entry name" value="RIBOSOME-RELEASING FACTOR 2, MITOCHONDRIAL"/>
    <property type="match status" value="1"/>
</dbReference>
<dbReference type="PANTHER" id="PTHR43261">
    <property type="entry name" value="TRANSLATION ELONGATION FACTOR G-RELATED"/>
    <property type="match status" value="1"/>
</dbReference>
<dbReference type="Pfam" id="PF00679">
    <property type="entry name" value="EFG_C"/>
    <property type="match status" value="1"/>
</dbReference>
<dbReference type="Pfam" id="PF14492">
    <property type="entry name" value="EFG_III"/>
    <property type="match status" value="1"/>
</dbReference>
<dbReference type="Pfam" id="PF03764">
    <property type="entry name" value="EFG_IV"/>
    <property type="match status" value="1"/>
</dbReference>
<dbReference type="Pfam" id="PF00009">
    <property type="entry name" value="GTP_EFTU"/>
    <property type="match status" value="1"/>
</dbReference>
<dbReference type="Pfam" id="PF03144">
    <property type="entry name" value="GTP_EFTU_D2"/>
    <property type="match status" value="1"/>
</dbReference>
<dbReference type="PRINTS" id="PR00315">
    <property type="entry name" value="ELONGATNFCT"/>
</dbReference>
<dbReference type="SMART" id="SM00838">
    <property type="entry name" value="EFG_C"/>
    <property type="match status" value="1"/>
</dbReference>
<dbReference type="SMART" id="SM00889">
    <property type="entry name" value="EFG_IV"/>
    <property type="match status" value="1"/>
</dbReference>
<dbReference type="SUPFAM" id="SSF54980">
    <property type="entry name" value="EF-G C-terminal domain-like"/>
    <property type="match status" value="2"/>
</dbReference>
<dbReference type="SUPFAM" id="SSF52540">
    <property type="entry name" value="P-loop containing nucleoside triphosphate hydrolases"/>
    <property type="match status" value="1"/>
</dbReference>
<dbReference type="SUPFAM" id="SSF54211">
    <property type="entry name" value="Ribosomal protein S5 domain 2-like"/>
    <property type="match status" value="1"/>
</dbReference>
<dbReference type="SUPFAM" id="SSF50447">
    <property type="entry name" value="Translation proteins"/>
    <property type="match status" value="1"/>
</dbReference>
<dbReference type="PROSITE" id="PS00301">
    <property type="entry name" value="G_TR_1"/>
    <property type="match status" value="1"/>
</dbReference>
<dbReference type="PROSITE" id="PS51722">
    <property type="entry name" value="G_TR_2"/>
    <property type="match status" value="1"/>
</dbReference>
<gene>
    <name evidence="1" type="primary">fusA1</name>
    <name type="ordered locus">BPSL0893</name>
</gene>
<name>EFG1_BURPS</name>
<keyword id="KW-0963">Cytoplasm</keyword>
<keyword id="KW-0251">Elongation factor</keyword>
<keyword id="KW-0342">GTP-binding</keyword>
<keyword id="KW-0547">Nucleotide-binding</keyword>
<keyword id="KW-0648">Protein biosynthesis</keyword>
<keyword id="KW-1185">Reference proteome</keyword>